<keyword id="KW-0007">Acetylation</keyword>
<keyword id="KW-0210">Decarboxylase</keyword>
<keyword id="KW-0333">Golgi apparatus</keyword>
<keyword id="KW-0456">Lyase</keyword>
<keyword id="KW-0472">Membrane</keyword>
<keyword id="KW-0520">NAD</keyword>
<keyword id="KW-1185">Reference proteome</keyword>
<keyword id="KW-0735">Signal-anchor</keyword>
<keyword id="KW-0812">Transmembrane</keyword>
<keyword id="KW-1133">Transmembrane helix</keyword>
<accession>Q9LZI2</accession>
<accession>Q39077</accession>
<sequence length="445" mass="49971">MASELINRRHETDQPTADAYYPKPIKPWFTVTRPMRYMLREQRLIFVLVGIAIATLVFTIFPRSTQSTPYSDPFSGYGIRPDESYVPAIQAQRKPSLEYLNRIGATGGKIPLGLKRKGLRVVVTGGAGFVGSHLVDRLMARGDTVIVVDNFFTGRKENVMHHFSNPNFEMIRHDVVEPILLEVDQIYHLACPASPVHYKFNPVKTIKTNVVGTLNMLGLAKRVGARFLLTSTSEVYGDPLQHPQVETYWGNVNPIGVRSCYDEGKRTAETLTMDYHRGANVEVRIARIFNTYGPRMCIDDGRVVSNFVAQALRKEPLTVYGDGKQTRSFQFVSDLVEGLMRLMEGEHVGPFNLGNPGEFTMLELAKVVQETIDPNANIEFRPNTEDDPHKRKPDITKAKELLGWEPKVSLRQGLPLMVKDFRQRVFGDQKEGSSAAATTTKTTSA</sequence>
<evidence type="ECO:0000250" key="1"/>
<evidence type="ECO:0000255" key="2"/>
<evidence type="ECO:0000269" key="3">
    <source>
    </source>
</evidence>
<evidence type="ECO:0000269" key="4">
    <source>
    </source>
</evidence>
<evidence type="ECO:0000305" key="5"/>
<evidence type="ECO:0000305" key="6">
    <source>
    </source>
</evidence>
<evidence type="ECO:0007744" key="7">
    <source>
    </source>
</evidence>
<gene>
    <name type="primary">UXS2</name>
    <name type="synonym">AUD1</name>
    <name type="synonym">D18</name>
    <name type="ordered locus">At3g62830</name>
    <name type="ORF">F26K9_260</name>
</gene>
<organism>
    <name type="scientific">Arabidopsis thaliana</name>
    <name type="common">Mouse-ear cress</name>
    <dbReference type="NCBI Taxonomy" id="3702"/>
    <lineage>
        <taxon>Eukaryota</taxon>
        <taxon>Viridiplantae</taxon>
        <taxon>Streptophyta</taxon>
        <taxon>Embryophyta</taxon>
        <taxon>Tracheophyta</taxon>
        <taxon>Spermatophyta</taxon>
        <taxon>Magnoliopsida</taxon>
        <taxon>eudicotyledons</taxon>
        <taxon>Gunneridae</taxon>
        <taxon>Pentapetalae</taxon>
        <taxon>rosids</taxon>
        <taxon>malvids</taxon>
        <taxon>Brassicales</taxon>
        <taxon>Brassicaceae</taxon>
        <taxon>Camelineae</taxon>
        <taxon>Arabidopsis</taxon>
    </lineage>
</organism>
<comment type="function">
    <text evidence="3 4">Catalyzes the NAD-dependent decarboxylation of UDP-glucuronic acid to UDP-xylose. Necessary for the biosynthesis of the core tetrasaccharide in glycosaminoglycan biosynthesis.</text>
</comment>
<comment type="catalytic activity">
    <reaction evidence="4">
        <text>UDP-alpha-D-glucuronate + H(+) = UDP-alpha-D-xylose + CO2</text>
        <dbReference type="Rhea" id="RHEA:23916"/>
        <dbReference type="ChEBI" id="CHEBI:15378"/>
        <dbReference type="ChEBI" id="CHEBI:16526"/>
        <dbReference type="ChEBI" id="CHEBI:57632"/>
        <dbReference type="ChEBI" id="CHEBI:58052"/>
        <dbReference type="EC" id="4.1.1.35"/>
    </reaction>
    <physiologicalReaction direction="left-to-right" evidence="6">
        <dbReference type="Rhea" id="RHEA:23917"/>
    </physiologicalReaction>
</comment>
<comment type="cofactor">
    <cofactor evidence="3 4">
        <name>NAD(+)</name>
        <dbReference type="ChEBI" id="CHEBI:57540"/>
    </cofactor>
</comment>
<comment type="biophysicochemical properties">
    <kinetics>
        <KM evidence="4">0.2 mM for UDP-D-glucuronate</KM>
    </kinetics>
    <phDependence>
        <text evidence="4">Optimum pH is 7.0.</text>
    </phDependence>
    <temperatureDependence>
        <text evidence="4">Optimum temperature is 50 degrees Celsius.</text>
    </temperatureDependence>
</comment>
<comment type="pathway">
    <text evidence="6">Nucleotide-sugar biosynthesis; UDP-alpha-D-xylose biosynthesis; UDP-alpha-D-xylose from UDP-alpha-D-glucuronate: step 1/1.</text>
</comment>
<comment type="subunit">
    <text evidence="4">Homodimer.</text>
</comment>
<comment type="subcellular location">
    <subcellularLocation>
        <location evidence="4">Golgi apparatus</location>
        <location evidence="4">Golgi stack membrane</location>
        <topology evidence="4">Single-pass type II membrane protein</topology>
    </subcellularLocation>
</comment>
<comment type="tissue specificity">
    <text evidence="3">Ubiquitous.</text>
</comment>
<comment type="similarity">
    <text evidence="5">Belongs to the NAD(P)-dependent epimerase/dehydratase family. UDP-glucuronic acid decarboxylase subfamily.</text>
</comment>
<name>UXS2_ARATH</name>
<protein>
    <recommendedName>
        <fullName>UDP-glucuronic acid decarboxylase 2</fullName>
        <ecNumber evidence="4">4.1.1.35</ecNumber>
    </recommendedName>
    <alternativeName>
        <fullName>UDP-XYL synthase 2</fullName>
    </alternativeName>
    <alternativeName>
        <fullName>UDP-glucuronate decarboxylase 2</fullName>
        <shortName>UGD</shortName>
        <shortName>UXS-2</shortName>
    </alternativeName>
    <alternativeName>
        <fullName>dTDP-glucose 4-6-dehydratase homolog D18</fullName>
    </alternativeName>
</protein>
<proteinExistence type="evidence at protein level"/>
<feature type="initiator methionine" description="Removed" evidence="7">
    <location>
        <position position="1"/>
    </location>
</feature>
<feature type="chain" id="PRO_0000421983" description="UDP-glucuronic acid decarboxylase 2">
    <location>
        <begin position="2"/>
        <end position="445"/>
    </location>
</feature>
<feature type="topological domain" description="Cytoplasmic" evidence="2">
    <location>
        <begin position="2"/>
        <end position="43"/>
    </location>
</feature>
<feature type="transmembrane region" description="Helical; Signal-anchor for type II membrane protein" evidence="2">
    <location>
        <begin position="44"/>
        <end position="64"/>
    </location>
</feature>
<feature type="topological domain" description="Lumenal" evidence="2">
    <location>
        <begin position="65"/>
        <end position="445"/>
    </location>
</feature>
<feature type="active site" description="Proton acceptor" evidence="1">
    <location>
        <position position="261"/>
    </location>
</feature>
<feature type="binding site" evidence="1">
    <location>
        <begin position="149"/>
        <end position="174"/>
    </location>
    <ligand>
        <name>NAD(+)</name>
        <dbReference type="ChEBI" id="CHEBI:57540"/>
    </ligand>
</feature>
<feature type="binding site" evidence="1">
    <location>
        <position position="258"/>
    </location>
    <ligand>
        <name>substrate</name>
    </ligand>
</feature>
<feature type="binding site" evidence="1">
    <location>
        <begin position="261"/>
        <end position="265"/>
    </location>
    <ligand>
        <name>NAD(+)</name>
        <dbReference type="ChEBI" id="CHEBI:57540"/>
    </ligand>
</feature>
<feature type="binding site" evidence="1">
    <location>
        <position position="290"/>
    </location>
    <ligand>
        <name>substrate</name>
    </ligand>
</feature>
<feature type="binding site" evidence="1">
    <location>
        <position position="302"/>
    </location>
    <ligand>
        <name>NAD(+)</name>
        <dbReference type="ChEBI" id="CHEBI:57540"/>
    </ligand>
</feature>
<feature type="binding site" evidence="1">
    <location>
        <begin position="303"/>
        <end position="307"/>
    </location>
    <ligand>
        <name>substrate</name>
    </ligand>
</feature>
<feature type="binding site" evidence="1">
    <location>
        <begin position="320"/>
        <end position="327"/>
    </location>
    <ligand>
        <name>substrate</name>
    </ligand>
</feature>
<feature type="binding site" evidence="1">
    <location>
        <begin position="387"/>
        <end position="391"/>
    </location>
    <ligand>
        <name>substrate</name>
    </ligand>
</feature>
<feature type="modified residue" description="N-acetylalanine" evidence="7">
    <location>
        <position position="2"/>
    </location>
</feature>
<feature type="sequence conflict" description="In Ref. 1; CAA89205, 2; AAK70881 and 3; AAK32785." evidence="5" ref="1 2 3">
    <original>A</original>
    <variation>S</variation>
    <location>
        <position position="279"/>
    </location>
</feature>
<reference key="1">
    <citation type="journal article" date="1995" name="Proc. Natl. Acad. Sci. U.S.A.">
        <title>Characterization of Arabidopsis thaliana cDNAs that render yeasts tolerant toward the thiol-oxidizing drug diamide.</title>
        <authorList>
            <person name="Kushnir S."/>
            <person name="Babiychuk E."/>
            <person name="Kampfenkel K."/>
            <person name="Belles-Boix E."/>
            <person name="Van Montagu M."/>
            <person name="Inze D."/>
        </authorList>
    </citation>
    <scope>NUCLEOTIDE SEQUENCE [MRNA]</scope>
    <source>
        <strain>cv. Columbia</strain>
        <tissue>Leaf</tissue>
    </source>
</reference>
<reference key="2">
    <citation type="journal article" date="2002" name="Plant Physiol.">
        <title>Biosynthesis of UDP-xylose. Cloning and characterization of a novel Arabidopsis gene family, UXS, encoding soluble and putative membrane-bound UDP-glucuronic acid decarboxylase isoforms.</title>
        <authorList>
            <person name="Harper A.D."/>
            <person name="Bar-Peled M."/>
        </authorList>
    </citation>
    <scope>NUCLEOTIDE SEQUENCE [MRNA]</scope>
    <scope>GENE FAMILY</scope>
    <scope>FUNCTION</scope>
    <scope>COFACTOR</scope>
    <scope>TISSUE SPECIFICITY</scope>
</reference>
<reference key="3">
    <citation type="journal article" date="2000" name="Nature">
        <title>Sequence and analysis of chromosome 3 of the plant Arabidopsis thaliana.</title>
        <authorList>
            <person name="Salanoubat M."/>
            <person name="Lemcke K."/>
            <person name="Rieger M."/>
            <person name="Ansorge W."/>
            <person name="Unseld M."/>
            <person name="Fartmann B."/>
            <person name="Valle G."/>
            <person name="Bloecker H."/>
            <person name="Perez-Alonso M."/>
            <person name="Obermaier B."/>
            <person name="Delseny M."/>
            <person name="Boutry M."/>
            <person name="Grivell L.A."/>
            <person name="Mache R."/>
            <person name="Puigdomenech P."/>
            <person name="De Simone V."/>
            <person name="Choisne N."/>
            <person name="Artiguenave F."/>
            <person name="Robert C."/>
            <person name="Brottier P."/>
            <person name="Wincker P."/>
            <person name="Cattolico L."/>
            <person name="Weissenbach J."/>
            <person name="Saurin W."/>
            <person name="Quetier F."/>
            <person name="Schaefer M."/>
            <person name="Mueller-Auer S."/>
            <person name="Gabel C."/>
            <person name="Fuchs M."/>
            <person name="Benes V."/>
            <person name="Wurmbach E."/>
            <person name="Drzonek H."/>
            <person name="Erfle H."/>
            <person name="Jordan N."/>
            <person name="Bangert S."/>
            <person name="Wiedelmann R."/>
            <person name="Kranz H."/>
            <person name="Voss H."/>
            <person name="Holland R."/>
            <person name="Brandt P."/>
            <person name="Nyakatura G."/>
            <person name="Vezzi A."/>
            <person name="D'Angelo M."/>
            <person name="Pallavicini A."/>
            <person name="Toppo S."/>
            <person name="Simionati B."/>
            <person name="Conrad A."/>
            <person name="Hornischer K."/>
            <person name="Kauer G."/>
            <person name="Loehnert T.-H."/>
            <person name="Nordsiek G."/>
            <person name="Reichelt J."/>
            <person name="Scharfe M."/>
            <person name="Schoen O."/>
            <person name="Bargues M."/>
            <person name="Terol J."/>
            <person name="Climent J."/>
            <person name="Navarro P."/>
            <person name="Collado C."/>
            <person name="Perez-Perez A."/>
            <person name="Ottenwaelder B."/>
            <person name="Duchemin D."/>
            <person name="Cooke R."/>
            <person name="Laudie M."/>
            <person name="Berger-Llauro C."/>
            <person name="Purnelle B."/>
            <person name="Masuy D."/>
            <person name="de Haan M."/>
            <person name="Maarse A.C."/>
            <person name="Alcaraz J.-P."/>
            <person name="Cottet A."/>
            <person name="Casacuberta E."/>
            <person name="Monfort A."/>
            <person name="Argiriou A."/>
            <person name="Flores M."/>
            <person name="Liguori R."/>
            <person name="Vitale D."/>
            <person name="Mannhaupt G."/>
            <person name="Haase D."/>
            <person name="Schoof H."/>
            <person name="Rudd S."/>
            <person name="Zaccaria P."/>
            <person name="Mewes H.-W."/>
            <person name="Mayer K.F.X."/>
            <person name="Kaul S."/>
            <person name="Town C.D."/>
            <person name="Koo H.L."/>
            <person name="Tallon L.J."/>
            <person name="Jenkins J."/>
            <person name="Rooney T."/>
            <person name="Rizzo M."/>
            <person name="Walts A."/>
            <person name="Utterback T."/>
            <person name="Fujii C.Y."/>
            <person name="Shea T.P."/>
            <person name="Creasy T.H."/>
            <person name="Haas B."/>
            <person name="Maiti R."/>
            <person name="Wu D."/>
            <person name="Peterson J."/>
            <person name="Van Aken S."/>
            <person name="Pai G."/>
            <person name="Militscher J."/>
            <person name="Sellers P."/>
            <person name="Gill J.E."/>
            <person name="Feldblyum T.V."/>
            <person name="Preuss D."/>
            <person name="Lin X."/>
            <person name="Nierman W.C."/>
            <person name="Salzberg S.L."/>
            <person name="White O."/>
            <person name="Venter J.C."/>
            <person name="Fraser C.M."/>
            <person name="Kaneko T."/>
            <person name="Nakamura Y."/>
            <person name="Sato S."/>
            <person name="Kato T."/>
            <person name="Asamizu E."/>
            <person name="Sasamoto S."/>
            <person name="Kimura T."/>
            <person name="Idesawa K."/>
            <person name="Kawashima K."/>
            <person name="Kishida Y."/>
            <person name="Kiyokawa C."/>
            <person name="Kohara M."/>
            <person name="Matsumoto M."/>
            <person name="Matsuno A."/>
            <person name="Muraki A."/>
            <person name="Nakayama S."/>
            <person name="Nakazaki N."/>
            <person name="Shinpo S."/>
            <person name="Takeuchi C."/>
            <person name="Wada T."/>
            <person name="Watanabe A."/>
            <person name="Yamada M."/>
            <person name="Yasuda M."/>
            <person name="Tabata S."/>
        </authorList>
    </citation>
    <scope>NUCLEOTIDE SEQUENCE [LARGE SCALE GENOMIC DNA]</scope>
    <source>
        <strain>cv. Columbia</strain>
    </source>
</reference>
<reference key="4">
    <citation type="journal article" date="2017" name="Plant J.">
        <title>Araport11: a complete reannotation of the Arabidopsis thaliana reference genome.</title>
        <authorList>
            <person name="Cheng C.Y."/>
            <person name="Krishnakumar V."/>
            <person name="Chan A.P."/>
            <person name="Thibaud-Nissen F."/>
            <person name="Schobel S."/>
            <person name="Town C.D."/>
        </authorList>
    </citation>
    <scope>GENOME REANNOTATION</scope>
    <source>
        <strain>cv. Columbia</strain>
    </source>
</reference>
<reference key="5">
    <citation type="journal article" date="2003" name="Science">
        <title>Empirical analysis of transcriptional activity in the Arabidopsis genome.</title>
        <authorList>
            <person name="Yamada K."/>
            <person name="Lim J."/>
            <person name="Dale J.M."/>
            <person name="Chen H."/>
            <person name="Shinn P."/>
            <person name="Palm C.J."/>
            <person name="Southwick A.M."/>
            <person name="Wu H.C."/>
            <person name="Kim C.J."/>
            <person name="Nguyen M."/>
            <person name="Pham P.K."/>
            <person name="Cheuk R.F."/>
            <person name="Karlin-Newmann G."/>
            <person name="Liu S.X."/>
            <person name="Lam B."/>
            <person name="Sakano H."/>
            <person name="Wu T."/>
            <person name="Yu G."/>
            <person name="Miranda M."/>
            <person name="Quach H.L."/>
            <person name="Tripp M."/>
            <person name="Chang C.H."/>
            <person name="Lee J.M."/>
            <person name="Toriumi M.J."/>
            <person name="Chan M.M."/>
            <person name="Tang C.C."/>
            <person name="Onodera C.S."/>
            <person name="Deng J.M."/>
            <person name="Akiyama K."/>
            <person name="Ansari Y."/>
            <person name="Arakawa T."/>
            <person name="Banh J."/>
            <person name="Banno F."/>
            <person name="Bowser L."/>
            <person name="Brooks S.Y."/>
            <person name="Carninci P."/>
            <person name="Chao Q."/>
            <person name="Choy N."/>
            <person name="Enju A."/>
            <person name="Goldsmith A.D."/>
            <person name="Gurjal M."/>
            <person name="Hansen N.F."/>
            <person name="Hayashizaki Y."/>
            <person name="Johnson-Hopson C."/>
            <person name="Hsuan V.W."/>
            <person name="Iida K."/>
            <person name="Karnes M."/>
            <person name="Khan S."/>
            <person name="Koesema E."/>
            <person name="Ishida J."/>
            <person name="Jiang P.X."/>
            <person name="Jones T."/>
            <person name="Kawai J."/>
            <person name="Kamiya A."/>
            <person name="Meyers C."/>
            <person name="Nakajima M."/>
            <person name="Narusaka M."/>
            <person name="Seki M."/>
            <person name="Sakurai T."/>
            <person name="Satou M."/>
            <person name="Tamse R."/>
            <person name="Vaysberg M."/>
            <person name="Wallender E.K."/>
            <person name="Wong C."/>
            <person name="Yamamura Y."/>
            <person name="Yuan S."/>
            <person name="Shinozaki K."/>
            <person name="Davis R.W."/>
            <person name="Theologis A."/>
            <person name="Ecker J.R."/>
        </authorList>
    </citation>
    <scope>NUCLEOTIDE SEQUENCE [LARGE SCALE MRNA]</scope>
    <source>
        <strain>cv. Columbia</strain>
    </source>
</reference>
<reference key="6">
    <citation type="journal article" date="2005" name="Planta">
        <title>Biosynthesis of UDP-xylose: characterization of membrane-bound AtUxs2.</title>
        <authorList>
            <person name="Pattathil S."/>
            <person name="Harper A.D."/>
            <person name="Bar-Peled M."/>
        </authorList>
    </citation>
    <scope>FUNCTION</scope>
    <scope>CATALYTIC ACTIVITY</scope>
    <scope>COFACTOR</scope>
    <scope>BIOPHYSICOCHEMICAL PROPERTIES</scope>
    <scope>SUBUNIT</scope>
    <scope>SUBCELLULAR LOCATION</scope>
</reference>
<reference key="7">
    <citation type="journal article" date="2012" name="Mol. Cell. Proteomics">
        <title>Comparative large-scale characterisation of plant vs. mammal proteins reveals similar and idiosyncratic N-alpha acetylation features.</title>
        <authorList>
            <person name="Bienvenut W.V."/>
            <person name="Sumpton D."/>
            <person name="Martinez A."/>
            <person name="Lilla S."/>
            <person name="Espagne C."/>
            <person name="Meinnel T."/>
            <person name="Giglione C."/>
        </authorList>
    </citation>
    <scope>ACETYLATION [LARGE SCALE ANALYSIS] AT ALA-2</scope>
    <scope>CLEAVAGE OF INITIATOR METHIONINE [LARGE SCALE ANALYSIS]</scope>
    <scope>IDENTIFICATION BY MASS SPECTROMETRY [LARGE SCALE ANALYSIS]</scope>
</reference>
<dbReference type="EC" id="4.1.1.35" evidence="4"/>
<dbReference type="EMBL" id="Z49239">
    <property type="protein sequence ID" value="CAA89205.1"/>
    <property type="molecule type" value="mRNA"/>
</dbReference>
<dbReference type="EMBL" id="AF387788">
    <property type="protein sequence ID" value="AAK70881.1"/>
    <property type="molecule type" value="mRNA"/>
</dbReference>
<dbReference type="EMBL" id="AL162651">
    <property type="protein sequence ID" value="CAB83133.1"/>
    <property type="molecule type" value="Genomic_DNA"/>
</dbReference>
<dbReference type="EMBL" id="CP002686">
    <property type="protein sequence ID" value="AEE80398.1"/>
    <property type="molecule type" value="Genomic_DNA"/>
</dbReference>
<dbReference type="EMBL" id="CP002686">
    <property type="protein sequence ID" value="AEE80399.1"/>
    <property type="molecule type" value="Genomic_DNA"/>
</dbReference>
<dbReference type="EMBL" id="AF361617">
    <property type="protein sequence ID" value="AAK32785.1"/>
    <property type="molecule type" value="mRNA"/>
</dbReference>
<dbReference type="EMBL" id="AY143897">
    <property type="protein sequence ID" value="AAN28836.1"/>
    <property type="molecule type" value="mRNA"/>
</dbReference>
<dbReference type="PIR" id="S58282">
    <property type="entry name" value="S58282"/>
</dbReference>
<dbReference type="PIR" id="T48072">
    <property type="entry name" value="T48072"/>
</dbReference>
<dbReference type="RefSeq" id="NP_001118893.1">
    <property type="nucleotide sequence ID" value="NM_001125421.1"/>
</dbReference>
<dbReference type="RefSeq" id="NP_191842.1">
    <property type="nucleotide sequence ID" value="NM_116148.3"/>
</dbReference>
<dbReference type="SMR" id="Q9LZI2"/>
<dbReference type="BioGRID" id="10772">
    <property type="interactions" value="1"/>
</dbReference>
<dbReference type="FunCoup" id="Q9LZI2">
    <property type="interactions" value="3569"/>
</dbReference>
<dbReference type="STRING" id="3702.Q9LZI2"/>
<dbReference type="iPTMnet" id="Q9LZI2"/>
<dbReference type="SwissPalm" id="Q9LZI2"/>
<dbReference type="PaxDb" id="3702-AT3G62830.1"/>
<dbReference type="ProteomicsDB" id="228543"/>
<dbReference type="EnsemblPlants" id="AT3G62830.1">
    <property type="protein sequence ID" value="AT3G62830.1"/>
    <property type="gene ID" value="AT3G62830"/>
</dbReference>
<dbReference type="EnsemblPlants" id="AT3G62830.2">
    <property type="protein sequence ID" value="AT3G62830.2"/>
    <property type="gene ID" value="AT3G62830"/>
</dbReference>
<dbReference type="GeneID" id="825458"/>
<dbReference type="Gramene" id="AT3G62830.1">
    <property type="protein sequence ID" value="AT3G62830.1"/>
    <property type="gene ID" value="AT3G62830"/>
</dbReference>
<dbReference type="Gramene" id="AT3G62830.2">
    <property type="protein sequence ID" value="AT3G62830.2"/>
    <property type="gene ID" value="AT3G62830"/>
</dbReference>
<dbReference type="KEGG" id="ath:AT3G62830"/>
<dbReference type="Araport" id="AT3G62830"/>
<dbReference type="TAIR" id="AT3G62830">
    <property type="gene designation" value="AUD1"/>
</dbReference>
<dbReference type="eggNOG" id="KOG1429">
    <property type="taxonomic scope" value="Eukaryota"/>
</dbReference>
<dbReference type="HOGENOM" id="CLU_007383_2_1_1"/>
<dbReference type="InParanoid" id="Q9LZI2"/>
<dbReference type="OMA" id="YANTGIY"/>
<dbReference type="PhylomeDB" id="Q9LZI2"/>
<dbReference type="BioCyc" id="ARA:AT3G62830-MONOMER"/>
<dbReference type="BioCyc" id="MetaCyc:AT3G62830-MONOMER"/>
<dbReference type="BRENDA" id="4.1.1.35">
    <property type="organism ID" value="399"/>
</dbReference>
<dbReference type="UniPathway" id="UPA00796">
    <property type="reaction ID" value="UER00771"/>
</dbReference>
<dbReference type="PRO" id="PR:Q9LZI2"/>
<dbReference type="Proteomes" id="UP000006548">
    <property type="component" value="Chromosome 3"/>
</dbReference>
<dbReference type="ExpressionAtlas" id="Q9LZI2">
    <property type="expression patterns" value="baseline and differential"/>
</dbReference>
<dbReference type="GO" id="GO:0005768">
    <property type="term" value="C:endosome"/>
    <property type="evidence" value="ECO:0007005"/>
    <property type="project" value="TAIR"/>
</dbReference>
<dbReference type="GO" id="GO:0005794">
    <property type="term" value="C:Golgi apparatus"/>
    <property type="evidence" value="ECO:0000314"/>
    <property type="project" value="TAIR"/>
</dbReference>
<dbReference type="GO" id="GO:0032580">
    <property type="term" value="C:Golgi cisterna membrane"/>
    <property type="evidence" value="ECO:0007669"/>
    <property type="project" value="UniProtKB-SubCell"/>
</dbReference>
<dbReference type="GO" id="GO:0000139">
    <property type="term" value="C:Golgi membrane"/>
    <property type="evidence" value="ECO:0000314"/>
    <property type="project" value="TAIR"/>
</dbReference>
<dbReference type="GO" id="GO:0000138">
    <property type="term" value="C:Golgi trans cisterna"/>
    <property type="evidence" value="ECO:0007005"/>
    <property type="project" value="TAIR"/>
</dbReference>
<dbReference type="GO" id="GO:0016020">
    <property type="term" value="C:membrane"/>
    <property type="evidence" value="ECO:0000304"/>
    <property type="project" value="TAIR"/>
</dbReference>
<dbReference type="GO" id="GO:0005886">
    <property type="term" value="C:plasma membrane"/>
    <property type="evidence" value="ECO:0007005"/>
    <property type="project" value="TAIR"/>
</dbReference>
<dbReference type="GO" id="GO:0005802">
    <property type="term" value="C:trans-Golgi network"/>
    <property type="evidence" value="ECO:0007005"/>
    <property type="project" value="TAIR"/>
</dbReference>
<dbReference type="GO" id="GO:0008460">
    <property type="term" value="F:dTDP-glucose 4,6-dehydratase activity"/>
    <property type="evidence" value="ECO:0000250"/>
    <property type="project" value="TAIR"/>
</dbReference>
<dbReference type="GO" id="GO:0070403">
    <property type="term" value="F:NAD+ binding"/>
    <property type="evidence" value="ECO:0007669"/>
    <property type="project" value="InterPro"/>
</dbReference>
<dbReference type="GO" id="GO:0048040">
    <property type="term" value="F:UDP-glucuronate decarboxylase activity"/>
    <property type="evidence" value="ECO:0000314"/>
    <property type="project" value="UniProtKB"/>
</dbReference>
<dbReference type="GO" id="GO:0042732">
    <property type="term" value="P:D-xylose metabolic process"/>
    <property type="evidence" value="ECO:0000314"/>
    <property type="project" value="UniProtKB"/>
</dbReference>
<dbReference type="GO" id="GO:0019305">
    <property type="term" value="P:dTDP-rhamnose biosynthetic process"/>
    <property type="evidence" value="ECO:0000250"/>
    <property type="project" value="TAIR"/>
</dbReference>
<dbReference type="GO" id="GO:0033320">
    <property type="term" value="P:UDP-D-xylose biosynthetic process"/>
    <property type="evidence" value="ECO:0007669"/>
    <property type="project" value="UniProtKB-UniPathway"/>
</dbReference>
<dbReference type="CDD" id="cd05230">
    <property type="entry name" value="UGD_SDR_e"/>
    <property type="match status" value="1"/>
</dbReference>
<dbReference type="FunFam" id="3.40.50.720:FF:000044">
    <property type="entry name" value="UDP-glucuronic acid decarboxylase 1"/>
    <property type="match status" value="1"/>
</dbReference>
<dbReference type="FunFam" id="3.40.50.720:FF:000073">
    <property type="entry name" value="UDP-glucuronic acid decarboxylase 2"/>
    <property type="match status" value="1"/>
</dbReference>
<dbReference type="Gene3D" id="3.40.50.720">
    <property type="entry name" value="NAD(P)-binding Rossmann-like Domain"/>
    <property type="match status" value="2"/>
</dbReference>
<dbReference type="InterPro" id="IPR016040">
    <property type="entry name" value="NAD(P)-bd_dom"/>
</dbReference>
<dbReference type="InterPro" id="IPR036291">
    <property type="entry name" value="NAD(P)-bd_dom_sf"/>
</dbReference>
<dbReference type="InterPro" id="IPR044516">
    <property type="entry name" value="UXS-like"/>
</dbReference>
<dbReference type="PANTHER" id="PTHR43078:SF41">
    <property type="entry name" value="UDP-GLUCURONIC ACID DECARBOXYLASE 2"/>
    <property type="match status" value="1"/>
</dbReference>
<dbReference type="PANTHER" id="PTHR43078">
    <property type="entry name" value="UDP-GLUCURONIC ACID DECARBOXYLASE-RELATED"/>
    <property type="match status" value="1"/>
</dbReference>
<dbReference type="Pfam" id="PF16363">
    <property type="entry name" value="GDP_Man_Dehyd"/>
    <property type="match status" value="1"/>
</dbReference>
<dbReference type="SUPFAM" id="SSF51735">
    <property type="entry name" value="NAD(P)-binding Rossmann-fold domains"/>
    <property type="match status" value="1"/>
</dbReference>